<keyword id="KW-0963">Cytoplasm</keyword>
<keyword id="KW-0489">Methyltransferase</keyword>
<keyword id="KW-0949">S-adenosyl-L-methionine</keyword>
<keyword id="KW-0808">Transferase</keyword>
<keyword id="KW-0819">tRNA processing</keyword>
<proteinExistence type="inferred from homology"/>
<dbReference type="EC" id="2.1.1.228" evidence="1"/>
<dbReference type="EMBL" id="CU928158">
    <property type="protein sequence ID" value="CAQ88024.1"/>
    <property type="molecule type" value="Genomic_DNA"/>
</dbReference>
<dbReference type="RefSeq" id="WP_000264776.1">
    <property type="nucleotide sequence ID" value="NC_011740.1"/>
</dbReference>
<dbReference type="SMR" id="B7LUW6"/>
<dbReference type="GeneID" id="75058466"/>
<dbReference type="KEGG" id="efe:EFER_0465"/>
<dbReference type="HOGENOM" id="CLU_047363_0_1_6"/>
<dbReference type="OrthoDB" id="9807416at2"/>
<dbReference type="Proteomes" id="UP000000745">
    <property type="component" value="Chromosome"/>
</dbReference>
<dbReference type="GO" id="GO:0005829">
    <property type="term" value="C:cytosol"/>
    <property type="evidence" value="ECO:0007669"/>
    <property type="project" value="TreeGrafter"/>
</dbReference>
<dbReference type="GO" id="GO:0052906">
    <property type="term" value="F:tRNA (guanine(37)-N1)-methyltransferase activity"/>
    <property type="evidence" value="ECO:0007669"/>
    <property type="project" value="UniProtKB-UniRule"/>
</dbReference>
<dbReference type="GO" id="GO:0002939">
    <property type="term" value="P:tRNA N1-guanine methylation"/>
    <property type="evidence" value="ECO:0007669"/>
    <property type="project" value="TreeGrafter"/>
</dbReference>
<dbReference type="CDD" id="cd18080">
    <property type="entry name" value="TrmD-like"/>
    <property type="match status" value="1"/>
</dbReference>
<dbReference type="FunFam" id="1.10.1270.20:FF:000001">
    <property type="entry name" value="tRNA (guanine-N(1)-)-methyltransferase"/>
    <property type="match status" value="1"/>
</dbReference>
<dbReference type="FunFam" id="3.40.1280.10:FF:000001">
    <property type="entry name" value="tRNA (guanine-N(1)-)-methyltransferase"/>
    <property type="match status" value="1"/>
</dbReference>
<dbReference type="Gene3D" id="3.40.1280.10">
    <property type="match status" value="1"/>
</dbReference>
<dbReference type="Gene3D" id="1.10.1270.20">
    <property type="entry name" value="tRNA(m1g37)methyltransferase, domain 2"/>
    <property type="match status" value="1"/>
</dbReference>
<dbReference type="HAMAP" id="MF_00605">
    <property type="entry name" value="TrmD"/>
    <property type="match status" value="1"/>
</dbReference>
<dbReference type="InterPro" id="IPR029028">
    <property type="entry name" value="Alpha/beta_knot_MTases"/>
</dbReference>
<dbReference type="InterPro" id="IPR023148">
    <property type="entry name" value="tRNA_m1G_MeTrfase_C_sf"/>
</dbReference>
<dbReference type="InterPro" id="IPR002649">
    <property type="entry name" value="tRNA_m1G_MeTrfase_TrmD"/>
</dbReference>
<dbReference type="InterPro" id="IPR029026">
    <property type="entry name" value="tRNA_m1G_MTases_N"/>
</dbReference>
<dbReference type="InterPro" id="IPR016009">
    <property type="entry name" value="tRNA_MeTrfase_TRMD/TRM10"/>
</dbReference>
<dbReference type="NCBIfam" id="NF000648">
    <property type="entry name" value="PRK00026.1"/>
    <property type="match status" value="1"/>
</dbReference>
<dbReference type="NCBIfam" id="TIGR00088">
    <property type="entry name" value="trmD"/>
    <property type="match status" value="1"/>
</dbReference>
<dbReference type="PANTHER" id="PTHR46417">
    <property type="entry name" value="TRNA (GUANINE-N(1)-)-METHYLTRANSFERASE"/>
    <property type="match status" value="1"/>
</dbReference>
<dbReference type="PANTHER" id="PTHR46417:SF1">
    <property type="entry name" value="TRNA (GUANINE-N(1)-)-METHYLTRANSFERASE"/>
    <property type="match status" value="1"/>
</dbReference>
<dbReference type="Pfam" id="PF01746">
    <property type="entry name" value="tRNA_m1G_MT"/>
    <property type="match status" value="1"/>
</dbReference>
<dbReference type="PIRSF" id="PIRSF000386">
    <property type="entry name" value="tRNA_mtase"/>
    <property type="match status" value="1"/>
</dbReference>
<dbReference type="SUPFAM" id="SSF75217">
    <property type="entry name" value="alpha/beta knot"/>
    <property type="match status" value="1"/>
</dbReference>
<reference key="1">
    <citation type="journal article" date="2009" name="PLoS Genet.">
        <title>Organised genome dynamics in the Escherichia coli species results in highly diverse adaptive paths.</title>
        <authorList>
            <person name="Touchon M."/>
            <person name="Hoede C."/>
            <person name="Tenaillon O."/>
            <person name="Barbe V."/>
            <person name="Baeriswyl S."/>
            <person name="Bidet P."/>
            <person name="Bingen E."/>
            <person name="Bonacorsi S."/>
            <person name="Bouchier C."/>
            <person name="Bouvet O."/>
            <person name="Calteau A."/>
            <person name="Chiapello H."/>
            <person name="Clermont O."/>
            <person name="Cruveiller S."/>
            <person name="Danchin A."/>
            <person name="Diard M."/>
            <person name="Dossat C."/>
            <person name="Karoui M.E."/>
            <person name="Frapy E."/>
            <person name="Garry L."/>
            <person name="Ghigo J.M."/>
            <person name="Gilles A.M."/>
            <person name="Johnson J."/>
            <person name="Le Bouguenec C."/>
            <person name="Lescat M."/>
            <person name="Mangenot S."/>
            <person name="Martinez-Jehanne V."/>
            <person name="Matic I."/>
            <person name="Nassif X."/>
            <person name="Oztas S."/>
            <person name="Petit M.A."/>
            <person name="Pichon C."/>
            <person name="Rouy Z."/>
            <person name="Ruf C.S."/>
            <person name="Schneider D."/>
            <person name="Tourret J."/>
            <person name="Vacherie B."/>
            <person name="Vallenet D."/>
            <person name="Medigue C."/>
            <person name="Rocha E.P.C."/>
            <person name="Denamur E."/>
        </authorList>
    </citation>
    <scope>NUCLEOTIDE SEQUENCE [LARGE SCALE GENOMIC DNA]</scope>
    <source>
        <strain>ATCC 35469 / DSM 13698 / BCRC 15582 / CCUG 18766 / IAM 14443 / JCM 21226 / LMG 7866 / NBRC 102419 / NCTC 12128 / CDC 0568-73</strain>
    </source>
</reference>
<feature type="chain" id="PRO_1000130171" description="tRNA (guanine-N(1)-)-methyltransferase">
    <location>
        <begin position="1"/>
        <end position="255"/>
    </location>
</feature>
<feature type="binding site" evidence="1">
    <location>
        <position position="113"/>
    </location>
    <ligand>
        <name>S-adenosyl-L-methionine</name>
        <dbReference type="ChEBI" id="CHEBI:59789"/>
    </ligand>
</feature>
<feature type="binding site" evidence="1">
    <location>
        <begin position="133"/>
        <end position="138"/>
    </location>
    <ligand>
        <name>S-adenosyl-L-methionine</name>
        <dbReference type="ChEBI" id="CHEBI:59789"/>
    </ligand>
</feature>
<protein>
    <recommendedName>
        <fullName evidence="1">tRNA (guanine-N(1)-)-methyltransferase</fullName>
        <ecNumber evidence="1">2.1.1.228</ecNumber>
    </recommendedName>
    <alternativeName>
        <fullName evidence="1">M1G-methyltransferase</fullName>
    </alternativeName>
    <alternativeName>
        <fullName evidence="1">tRNA [GM37] methyltransferase</fullName>
    </alternativeName>
</protein>
<organism>
    <name type="scientific">Escherichia fergusonii (strain ATCC 35469 / DSM 13698 / CCUG 18766 / IAM 14443 / JCM 21226 / LMG 7866 / NBRC 102419 / NCTC 12128 / CDC 0568-73)</name>
    <dbReference type="NCBI Taxonomy" id="585054"/>
    <lineage>
        <taxon>Bacteria</taxon>
        <taxon>Pseudomonadati</taxon>
        <taxon>Pseudomonadota</taxon>
        <taxon>Gammaproteobacteria</taxon>
        <taxon>Enterobacterales</taxon>
        <taxon>Enterobacteriaceae</taxon>
        <taxon>Escherichia</taxon>
    </lineage>
</organism>
<evidence type="ECO:0000255" key="1">
    <source>
        <dbReference type="HAMAP-Rule" id="MF_00605"/>
    </source>
</evidence>
<accession>B7LUW6</accession>
<gene>
    <name evidence="1" type="primary">trmD</name>
    <name type="ordered locus">EFER_0465</name>
</gene>
<comment type="function">
    <text evidence="1">Specifically methylates guanosine-37 in various tRNAs.</text>
</comment>
<comment type="catalytic activity">
    <reaction evidence="1">
        <text>guanosine(37) in tRNA + S-adenosyl-L-methionine = N(1)-methylguanosine(37) in tRNA + S-adenosyl-L-homocysteine + H(+)</text>
        <dbReference type="Rhea" id="RHEA:36899"/>
        <dbReference type="Rhea" id="RHEA-COMP:10145"/>
        <dbReference type="Rhea" id="RHEA-COMP:10147"/>
        <dbReference type="ChEBI" id="CHEBI:15378"/>
        <dbReference type="ChEBI" id="CHEBI:57856"/>
        <dbReference type="ChEBI" id="CHEBI:59789"/>
        <dbReference type="ChEBI" id="CHEBI:73542"/>
        <dbReference type="ChEBI" id="CHEBI:74269"/>
        <dbReference type="EC" id="2.1.1.228"/>
    </reaction>
</comment>
<comment type="subunit">
    <text evidence="1">Homodimer.</text>
</comment>
<comment type="subcellular location">
    <subcellularLocation>
        <location evidence="1">Cytoplasm</location>
    </subcellularLocation>
</comment>
<comment type="similarity">
    <text evidence="1">Belongs to the RNA methyltransferase TrmD family.</text>
</comment>
<sequence length="255" mass="28449">MWIGIISLFPEMFRAITDYGVTGRAVKNGLLSIQSWSPRDFTHDRHRTVDDRPYGGGPGMLMMVQPLRDAIHAAKAAAGEGAKVIYLSPQGRKLDQAGVSELATNQKLILVCGRYEGIDERVIQTEIDEEWSIGDYVLSGGELPAMTLIDSVSRFIPGVLGHEASATEDSFAEGLLDCPHYTRPEVLEGMEVPPVLLSGNHAEIRRWRLKQSLGRTWLRRPELLENLALTEEQARLLAEFKKEHAQQQHKHDGMA</sequence>
<name>TRMD_ESCF3</name>